<dbReference type="EC" id="6.1.1.19" evidence="1"/>
<dbReference type="EMBL" id="CP000431">
    <property type="protein sequence ID" value="ABG93305.1"/>
    <property type="molecule type" value="Genomic_DNA"/>
</dbReference>
<dbReference type="RefSeq" id="WP_009474181.1">
    <property type="nucleotide sequence ID" value="NC_008268.1"/>
</dbReference>
<dbReference type="SMR" id="Q0SGN1"/>
<dbReference type="KEGG" id="rha:RHA1_ro01490"/>
<dbReference type="eggNOG" id="COG0018">
    <property type="taxonomic scope" value="Bacteria"/>
</dbReference>
<dbReference type="HOGENOM" id="CLU_006406_0_1_11"/>
<dbReference type="OrthoDB" id="9803211at2"/>
<dbReference type="Proteomes" id="UP000008710">
    <property type="component" value="Chromosome"/>
</dbReference>
<dbReference type="GO" id="GO:0005737">
    <property type="term" value="C:cytoplasm"/>
    <property type="evidence" value="ECO:0007669"/>
    <property type="project" value="UniProtKB-SubCell"/>
</dbReference>
<dbReference type="GO" id="GO:0004814">
    <property type="term" value="F:arginine-tRNA ligase activity"/>
    <property type="evidence" value="ECO:0007669"/>
    <property type="project" value="UniProtKB-UniRule"/>
</dbReference>
<dbReference type="GO" id="GO:0005524">
    <property type="term" value="F:ATP binding"/>
    <property type="evidence" value="ECO:0007669"/>
    <property type="project" value="UniProtKB-UniRule"/>
</dbReference>
<dbReference type="GO" id="GO:0006420">
    <property type="term" value="P:arginyl-tRNA aminoacylation"/>
    <property type="evidence" value="ECO:0007669"/>
    <property type="project" value="UniProtKB-UniRule"/>
</dbReference>
<dbReference type="CDD" id="cd07956">
    <property type="entry name" value="Anticodon_Ia_Arg"/>
    <property type="match status" value="1"/>
</dbReference>
<dbReference type="CDD" id="cd00671">
    <property type="entry name" value="ArgRS_core"/>
    <property type="match status" value="1"/>
</dbReference>
<dbReference type="FunFam" id="1.10.730.10:FF:000008">
    <property type="entry name" value="Arginine--tRNA ligase"/>
    <property type="match status" value="1"/>
</dbReference>
<dbReference type="FunFam" id="3.40.50.620:FF:000062">
    <property type="entry name" value="Arginine--tRNA ligase"/>
    <property type="match status" value="1"/>
</dbReference>
<dbReference type="Gene3D" id="3.30.1360.70">
    <property type="entry name" value="Arginyl tRNA synthetase N-terminal domain"/>
    <property type="match status" value="1"/>
</dbReference>
<dbReference type="Gene3D" id="3.40.50.620">
    <property type="entry name" value="HUPs"/>
    <property type="match status" value="1"/>
</dbReference>
<dbReference type="Gene3D" id="1.10.730.10">
    <property type="entry name" value="Isoleucyl-tRNA Synthetase, Domain 1"/>
    <property type="match status" value="1"/>
</dbReference>
<dbReference type="HAMAP" id="MF_00123">
    <property type="entry name" value="Arg_tRNA_synth"/>
    <property type="match status" value="1"/>
</dbReference>
<dbReference type="InterPro" id="IPR001412">
    <property type="entry name" value="aa-tRNA-synth_I_CS"/>
</dbReference>
<dbReference type="InterPro" id="IPR001278">
    <property type="entry name" value="Arg-tRNA-ligase"/>
</dbReference>
<dbReference type="InterPro" id="IPR005148">
    <property type="entry name" value="Arg-tRNA-synth_N"/>
</dbReference>
<dbReference type="InterPro" id="IPR036695">
    <property type="entry name" value="Arg-tRNA-synth_N_sf"/>
</dbReference>
<dbReference type="InterPro" id="IPR035684">
    <property type="entry name" value="ArgRS_core"/>
</dbReference>
<dbReference type="InterPro" id="IPR008909">
    <property type="entry name" value="DALR_anticod-bd"/>
</dbReference>
<dbReference type="InterPro" id="IPR014729">
    <property type="entry name" value="Rossmann-like_a/b/a_fold"/>
</dbReference>
<dbReference type="InterPro" id="IPR009080">
    <property type="entry name" value="tRNAsynth_Ia_anticodon-bd"/>
</dbReference>
<dbReference type="NCBIfam" id="TIGR00456">
    <property type="entry name" value="argS"/>
    <property type="match status" value="1"/>
</dbReference>
<dbReference type="PANTHER" id="PTHR11956:SF5">
    <property type="entry name" value="ARGININE--TRNA LIGASE, CYTOPLASMIC"/>
    <property type="match status" value="1"/>
</dbReference>
<dbReference type="PANTHER" id="PTHR11956">
    <property type="entry name" value="ARGINYL-TRNA SYNTHETASE"/>
    <property type="match status" value="1"/>
</dbReference>
<dbReference type="Pfam" id="PF03485">
    <property type="entry name" value="Arg_tRNA_synt_N"/>
    <property type="match status" value="1"/>
</dbReference>
<dbReference type="Pfam" id="PF05746">
    <property type="entry name" value="DALR_1"/>
    <property type="match status" value="1"/>
</dbReference>
<dbReference type="Pfam" id="PF00750">
    <property type="entry name" value="tRNA-synt_1d"/>
    <property type="match status" value="1"/>
</dbReference>
<dbReference type="PRINTS" id="PR01038">
    <property type="entry name" value="TRNASYNTHARG"/>
</dbReference>
<dbReference type="SMART" id="SM01016">
    <property type="entry name" value="Arg_tRNA_synt_N"/>
    <property type="match status" value="1"/>
</dbReference>
<dbReference type="SMART" id="SM00836">
    <property type="entry name" value="DALR_1"/>
    <property type="match status" value="1"/>
</dbReference>
<dbReference type="SUPFAM" id="SSF47323">
    <property type="entry name" value="Anticodon-binding domain of a subclass of class I aminoacyl-tRNA synthetases"/>
    <property type="match status" value="1"/>
</dbReference>
<dbReference type="SUPFAM" id="SSF55190">
    <property type="entry name" value="Arginyl-tRNA synthetase (ArgRS), N-terminal 'additional' domain"/>
    <property type="match status" value="1"/>
</dbReference>
<dbReference type="SUPFAM" id="SSF52374">
    <property type="entry name" value="Nucleotidylyl transferase"/>
    <property type="match status" value="1"/>
</dbReference>
<dbReference type="PROSITE" id="PS00178">
    <property type="entry name" value="AA_TRNA_LIGASE_I"/>
    <property type="match status" value="1"/>
</dbReference>
<proteinExistence type="inferred from homology"/>
<name>SYR_RHOJR</name>
<organism>
    <name type="scientific">Rhodococcus jostii (strain RHA1)</name>
    <dbReference type="NCBI Taxonomy" id="101510"/>
    <lineage>
        <taxon>Bacteria</taxon>
        <taxon>Bacillati</taxon>
        <taxon>Actinomycetota</taxon>
        <taxon>Actinomycetes</taxon>
        <taxon>Mycobacteriales</taxon>
        <taxon>Nocardiaceae</taxon>
        <taxon>Rhodococcus</taxon>
    </lineage>
</organism>
<evidence type="ECO:0000255" key="1">
    <source>
        <dbReference type="HAMAP-Rule" id="MF_00123"/>
    </source>
</evidence>
<gene>
    <name evidence="1" type="primary">argS</name>
    <name type="ordered locus">RHA1_ro01490</name>
</gene>
<feature type="chain" id="PRO_1000018103" description="Arginine--tRNA ligase">
    <location>
        <begin position="1"/>
        <end position="550"/>
    </location>
</feature>
<feature type="short sequence motif" description="'HIGH' region">
    <location>
        <begin position="130"/>
        <end position="140"/>
    </location>
</feature>
<comment type="catalytic activity">
    <reaction evidence="1">
        <text>tRNA(Arg) + L-arginine + ATP = L-arginyl-tRNA(Arg) + AMP + diphosphate</text>
        <dbReference type="Rhea" id="RHEA:20301"/>
        <dbReference type="Rhea" id="RHEA-COMP:9658"/>
        <dbReference type="Rhea" id="RHEA-COMP:9673"/>
        <dbReference type="ChEBI" id="CHEBI:30616"/>
        <dbReference type="ChEBI" id="CHEBI:32682"/>
        <dbReference type="ChEBI" id="CHEBI:33019"/>
        <dbReference type="ChEBI" id="CHEBI:78442"/>
        <dbReference type="ChEBI" id="CHEBI:78513"/>
        <dbReference type="ChEBI" id="CHEBI:456215"/>
        <dbReference type="EC" id="6.1.1.19"/>
    </reaction>
</comment>
<comment type="subunit">
    <text evidence="1">Monomer.</text>
</comment>
<comment type="subcellular location">
    <subcellularLocation>
        <location evidence="1">Cytoplasm</location>
    </subcellularLocation>
</comment>
<comment type="similarity">
    <text evidence="1">Belongs to the class-I aminoacyl-tRNA synthetase family.</text>
</comment>
<protein>
    <recommendedName>
        <fullName evidence="1">Arginine--tRNA ligase</fullName>
        <ecNumber evidence="1">6.1.1.19</ecNumber>
    </recommendedName>
    <alternativeName>
        <fullName evidence="1">Arginyl-tRNA synthetase</fullName>
        <shortName evidence="1">ArgRS</shortName>
    </alternativeName>
</protein>
<accession>Q0SGN1</accession>
<keyword id="KW-0030">Aminoacyl-tRNA synthetase</keyword>
<keyword id="KW-0067">ATP-binding</keyword>
<keyword id="KW-0963">Cytoplasm</keyword>
<keyword id="KW-0436">Ligase</keyword>
<keyword id="KW-0547">Nucleotide-binding</keyword>
<keyword id="KW-0648">Protein biosynthesis</keyword>
<sequence>MTPADLAELLRGTAAKVLDERGLDVSVLPETLTVERPRNPEHGDYATNVAMQVAKKVGTNPRELAGWLAEALTAAEGIDSADIAGPGFLNIRLAADAQGAIVAKILDEGAAFGSGHTLDGKRINLEFVSANPTGPIHLGGTRWAAVGDALGRILSTQGAAVTREYYFNDHGAQIDRFSRSLIAAAKGEPAPEDGYAGAYIADIAAQVQSQRPDVLELPAGEQQEVFRAIGVDLMFAHIKRTLHEFGVDFDVYFHENSLFESGAVEKAVETLKDSGNLFQEDGAWWLKSTDFGDDKDRVVIKSDGNAAYIAGDIAYFQDKRSRGFDLCIYMLGADHHGYIGRLKAAAAAFGDDPDTVEVLIGQMVNLVRDGVAVKMSKRAGTVITLDDLVEAIGVDASRYAMIRSSVDSSIDIDLELWTSTGNENPVYYVQYAHARLSAIARNAADLGIAVADPDFSLLVSEQEGDLIRTLGEYPRVVTSAANLREPHRIARYLEELAGAYHRFYGACRILPQGDEEVGPLHIARLALCDASRQVLSNGLALLGVSAPEQM</sequence>
<reference key="1">
    <citation type="journal article" date="2006" name="Proc. Natl. Acad. Sci. U.S.A.">
        <title>The complete genome of Rhodococcus sp. RHA1 provides insights into a catabolic powerhouse.</title>
        <authorList>
            <person name="McLeod M.P."/>
            <person name="Warren R.L."/>
            <person name="Hsiao W.W.L."/>
            <person name="Araki N."/>
            <person name="Myhre M."/>
            <person name="Fernandes C."/>
            <person name="Miyazawa D."/>
            <person name="Wong W."/>
            <person name="Lillquist A.L."/>
            <person name="Wang D."/>
            <person name="Dosanjh M."/>
            <person name="Hara H."/>
            <person name="Petrescu A."/>
            <person name="Morin R.D."/>
            <person name="Yang G."/>
            <person name="Stott J.M."/>
            <person name="Schein J.E."/>
            <person name="Shin H."/>
            <person name="Smailus D."/>
            <person name="Siddiqui A.S."/>
            <person name="Marra M.A."/>
            <person name="Jones S.J.M."/>
            <person name="Holt R."/>
            <person name="Brinkman F.S.L."/>
            <person name="Miyauchi K."/>
            <person name="Fukuda M."/>
            <person name="Davies J.E."/>
            <person name="Mohn W.W."/>
            <person name="Eltis L.D."/>
        </authorList>
    </citation>
    <scope>NUCLEOTIDE SEQUENCE [LARGE SCALE GENOMIC DNA]</scope>
    <source>
        <strain>RHA1</strain>
    </source>
</reference>